<accession>Q67480</accession>
<accession>Q9J5G0</accession>
<name>DNLI_FOWPN</name>
<dbReference type="EC" id="6.5.1.1" evidence="2"/>
<dbReference type="EMBL" id="Z29716">
    <property type="protein sequence ID" value="CAA82805.1"/>
    <property type="molecule type" value="Genomic_DNA"/>
</dbReference>
<dbReference type="EMBL" id="AF198100">
    <property type="protein sequence ID" value="AAF44387.1"/>
    <property type="molecule type" value="Genomic_DNA"/>
</dbReference>
<dbReference type="PIR" id="S41974">
    <property type="entry name" value="S41974"/>
</dbReference>
<dbReference type="RefSeq" id="NP_039006.1">
    <property type="nucleotide sequence ID" value="NC_002188.1"/>
</dbReference>
<dbReference type="SMR" id="Q67480"/>
<dbReference type="GeneID" id="1486591"/>
<dbReference type="KEGG" id="vg:1486591"/>
<dbReference type="Proteomes" id="UP000008597">
    <property type="component" value="Segment"/>
</dbReference>
<dbReference type="GO" id="GO:0005524">
    <property type="term" value="F:ATP binding"/>
    <property type="evidence" value="ECO:0007669"/>
    <property type="project" value="UniProtKB-KW"/>
</dbReference>
<dbReference type="GO" id="GO:0003677">
    <property type="term" value="F:DNA binding"/>
    <property type="evidence" value="ECO:0007669"/>
    <property type="project" value="InterPro"/>
</dbReference>
<dbReference type="GO" id="GO:0003910">
    <property type="term" value="F:DNA ligase (ATP) activity"/>
    <property type="evidence" value="ECO:0007669"/>
    <property type="project" value="UniProtKB-EC"/>
</dbReference>
<dbReference type="GO" id="GO:0046872">
    <property type="term" value="F:metal ion binding"/>
    <property type="evidence" value="ECO:0007669"/>
    <property type="project" value="UniProtKB-KW"/>
</dbReference>
<dbReference type="GO" id="GO:0051301">
    <property type="term" value="P:cell division"/>
    <property type="evidence" value="ECO:0007669"/>
    <property type="project" value="UniProtKB-KW"/>
</dbReference>
<dbReference type="GO" id="GO:0071897">
    <property type="term" value="P:DNA biosynthetic process"/>
    <property type="evidence" value="ECO:0007669"/>
    <property type="project" value="InterPro"/>
</dbReference>
<dbReference type="GO" id="GO:0006310">
    <property type="term" value="P:DNA recombination"/>
    <property type="evidence" value="ECO:0007669"/>
    <property type="project" value="UniProtKB-KW"/>
</dbReference>
<dbReference type="GO" id="GO:0006302">
    <property type="term" value="P:double-strand break repair"/>
    <property type="evidence" value="ECO:0007669"/>
    <property type="project" value="TreeGrafter"/>
</dbReference>
<dbReference type="GO" id="GO:0006273">
    <property type="term" value="P:lagging strand elongation"/>
    <property type="evidence" value="ECO:0007669"/>
    <property type="project" value="TreeGrafter"/>
</dbReference>
<dbReference type="CDD" id="cd07967">
    <property type="entry name" value="OBF_DNA_ligase_III"/>
    <property type="match status" value="1"/>
</dbReference>
<dbReference type="FunFam" id="3.30.470.30:FF:000003">
    <property type="entry name" value="DNA ligase"/>
    <property type="match status" value="1"/>
</dbReference>
<dbReference type="Gene3D" id="3.30.1490.70">
    <property type="match status" value="1"/>
</dbReference>
<dbReference type="Gene3D" id="1.10.3260.10">
    <property type="entry name" value="DNA ligase, ATP-dependent, N-terminal domain"/>
    <property type="match status" value="1"/>
</dbReference>
<dbReference type="Gene3D" id="3.30.470.30">
    <property type="entry name" value="DNA ligase/mRNA capping enzyme"/>
    <property type="match status" value="1"/>
</dbReference>
<dbReference type="Gene3D" id="2.40.50.140">
    <property type="entry name" value="Nucleic acid-binding proteins"/>
    <property type="match status" value="1"/>
</dbReference>
<dbReference type="InterPro" id="IPR050191">
    <property type="entry name" value="ATP-dep_DNA_ligase"/>
</dbReference>
<dbReference type="InterPro" id="IPR000977">
    <property type="entry name" value="DNA_ligase_ATP-dep"/>
</dbReference>
<dbReference type="InterPro" id="IPR012309">
    <property type="entry name" value="DNA_ligase_ATP-dep_C"/>
</dbReference>
<dbReference type="InterPro" id="IPR012310">
    <property type="entry name" value="DNA_ligase_ATP-dep_cent"/>
</dbReference>
<dbReference type="InterPro" id="IPR016059">
    <property type="entry name" value="DNA_ligase_ATP-dep_CS"/>
</dbReference>
<dbReference type="InterPro" id="IPR012308">
    <property type="entry name" value="DNA_ligase_ATP-dep_N"/>
</dbReference>
<dbReference type="InterPro" id="IPR036599">
    <property type="entry name" value="DNA_ligase_N_sf"/>
</dbReference>
<dbReference type="InterPro" id="IPR012340">
    <property type="entry name" value="NA-bd_OB-fold"/>
</dbReference>
<dbReference type="NCBIfam" id="TIGR00574">
    <property type="entry name" value="dnl1"/>
    <property type="match status" value="1"/>
</dbReference>
<dbReference type="PANTHER" id="PTHR45674">
    <property type="entry name" value="DNA LIGASE 1/3 FAMILY MEMBER"/>
    <property type="match status" value="1"/>
</dbReference>
<dbReference type="PANTHER" id="PTHR45674:SF9">
    <property type="entry name" value="DNA LIGASE 3"/>
    <property type="match status" value="1"/>
</dbReference>
<dbReference type="Pfam" id="PF04679">
    <property type="entry name" value="DNA_ligase_A_C"/>
    <property type="match status" value="1"/>
</dbReference>
<dbReference type="Pfam" id="PF01068">
    <property type="entry name" value="DNA_ligase_A_M"/>
    <property type="match status" value="1"/>
</dbReference>
<dbReference type="Pfam" id="PF04675">
    <property type="entry name" value="DNA_ligase_A_N"/>
    <property type="match status" value="1"/>
</dbReference>
<dbReference type="SUPFAM" id="SSF117018">
    <property type="entry name" value="ATP-dependent DNA ligase DNA-binding domain"/>
    <property type="match status" value="1"/>
</dbReference>
<dbReference type="SUPFAM" id="SSF56091">
    <property type="entry name" value="DNA ligase/mRNA capping enzyme, catalytic domain"/>
    <property type="match status" value="1"/>
</dbReference>
<dbReference type="SUPFAM" id="SSF50249">
    <property type="entry name" value="Nucleic acid-binding proteins"/>
    <property type="match status" value="1"/>
</dbReference>
<dbReference type="PROSITE" id="PS00697">
    <property type="entry name" value="DNA_LIGASE_A1"/>
    <property type="match status" value="1"/>
</dbReference>
<dbReference type="PROSITE" id="PS50160">
    <property type="entry name" value="DNA_LIGASE_A3"/>
    <property type="match status" value="1"/>
</dbReference>
<gene>
    <name type="primary">LIG</name>
    <name type="ordered locus">FPV043</name>
    <name type="ORF">A50R</name>
</gene>
<keyword id="KW-0067">ATP-binding</keyword>
<keyword id="KW-0131">Cell cycle</keyword>
<keyword id="KW-0132">Cell division</keyword>
<keyword id="KW-0227">DNA damage</keyword>
<keyword id="KW-0233">DNA recombination</keyword>
<keyword id="KW-0234">DNA repair</keyword>
<keyword id="KW-0235">DNA replication</keyword>
<keyword id="KW-0436">Ligase</keyword>
<keyword id="KW-0479">Metal-binding</keyword>
<keyword id="KW-0547">Nucleotide-binding</keyword>
<keyword id="KW-1185">Reference proteome</keyword>
<feature type="chain" id="PRO_0000059591" description="DNA ligase">
    <location>
        <begin position="1"/>
        <end position="564"/>
    </location>
</feature>
<feature type="active site" description="N6-AMP-lysine intermediate" evidence="2">
    <location>
        <position position="236"/>
    </location>
</feature>
<feature type="binding site" evidence="1">
    <location>
        <position position="234"/>
    </location>
    <ligand>
        <name>ATP</name>
        <dbReference type="ChEBI" id="CHEBI:30616"/>
    </ligand>
</feature>
<feature type="binding site" evidence="1">
    <location>
        <position position="241"/>
    </location>
    <ligand>
        <name>ATP</name>
        <dbReference type="ChEBI" id="CHEBI:30616"/>
    </ligand>
</feature>
<feature type="binding site" evidence="1">
    <location>
        <position position="256"/>
    </location>
    <ligand>
        <name>ATP</name>
        <dbReference type="ChEBI" id="CHEBI:30616"/>
    </ligand>
</feature>
<feature type="binding site" evidence="1">
    <location>
        <position position="288"/>
    </location>
    <ligand>
        <name>a divalent metal cation</name>
        <dbReference type="ChEBI" id="CHEBI:60240"/>
        <label>1</label>
    </ligand>
</feature>
<feature type="binding site" evidence="1">
    <location>
        <position position="288"/>
    </location>
    <ligand>
        <name>ATP</name>
        <dbReference type="ChEBI" id="CHEBI:30616"/>
    </ligand>
</feature>
<feature type="binding site" evidence="1">
    <location>
        <position position="323"/>
    </location>
    <ligand>
        <name>ATP</name>
        <dbReference type="ChEBI" id="CHEBI:30616"/>
    </ligand>
</feature>
<feature type="binding site" evidence="1">
    <location>
        <position position="383"/>
    </location>
    <ligand>
        <name>a divalent metal cation</name>
        <dbReference type="ChEBI" id="CHEBI:60240"/>
        <label>2</label>
    </ligand>
</feature>
<feature type="binding site" evidence="1">
    <location>
        <position position="399"/>
    </location>
    <ligand>
        <name>ATP</name>
        <dbReference type="ChEBI" id="CHEBI:30616"/>
    </ligand>
</feature>
<feature type="binding site" evidence="1">
    <location>
        <position position="403"/>
    </location>
    <ligand>
        <name>ATP</name>
        <dbReference type="ChEBI" id="CHEBI:30616"/>
    </ligand>
</feature>
<feature type="sequence conflict" description="In Ref. 1; CAA82805." evidence="3" ref="1">
    <original>K</original>
    <variation>N</variation>
    <location>
        <position position="281"/>
    </location>
</feature>
<organismHost>
    <name type="scientific">Vertebrata</name>
    <dbReference type="NCBI Taxonomy" id="7742"/>
</organismHost>
<organism>
    <name type="scientific">Fowlpox virus (strain NVSL)</name>
    <name type="common">FPV</name>
    <dbReference type="NCBI Taxonomy" id="928301"/>
    <lineage>
        <taxon>Viruses</taxon>
        <taxon>Varidnaviria</taxon>
        <taxon>Bamfordvirae</taxon>
        <taxon>Nucleocytoviricota</taxon>
        <taxon>Pokkesviricetes</taxon>
        <taxon>Chitovirales</taxon>
        <taxon>Poxviridae</taxon>
        <taxon>Chordopoxvirinae</taxon>
        <taxon>Avipoxvirus</taxon>
        <taxon>Fowlpox virus</taxon>
    </lineage>
</organism>
<proteinExistence type="inferred from homology"/>
<comment type="function">
    <text>DNA ligase that seals nicks in double-stranded DNA during DNA replication, DNA recombination and DNA repair. It is not essential for viral replication and recombination.</text>
</comment>
<comment type="catalytic activity">
    <reaction evidence="2">
        <text>ATP + (deoxyribonucleotide)n-3'-hydroxyl + 5'-phospho-(deoxyribonucleotide)m = (deoxyribonucleotide)n+m + AMP + diphosphate.</text>
        <dbReference type="EC" id="6.5.1.1"/>
    </reaction>
</comment>
<comment type="cofactor">
    <cofactor evidence="1">
        <name>a divalent metal cation</name>
        <dbReference type="ChEBI" id="CHEBI:60240"/>
    </cofactor>
</comment>
<comment type="similarity">
    <text evidence="3">Belongs to the ATP-dependent DNA ligase family.</text>
</comment>
<evidence type="ECO:0000250" key="1"/>
<evidence type="ECO:0000255" key="2">
    <source>
        <dbReference type="PROSITE-ProRule" id="PRU10135"/>
    </source>
</evidence>
<evidence type="ECO:0000305" key="3"/>
<protein>
    <recommendedName>
        <fullName>DNA ligase</fullName>
        <ecNumber evidence="2">6.5.1.1</ecNumber>
    </recommendedName>
    <alternativeName>
        <fullName>Polydeoxyribonucleotide synthase [ATP]</fullName>
    </alternativeName>
</protein>
<reference key="1">
    <citation type="journal article" date="1994" name="J. Gen. Virol.">
        <title>Deletion of fowlpox virus homologues of vaccinia virus genes between the 3 beta-hydroxysteroid dehydrogenase (A44L) and DNA ligase (A50R) genes.</title>
        <authorList>
            <person name="Skinner M.A."/>
            <person name="Moore J.B."/>
            <person name="Binns M.M."/>
            <person name="Smith G.L."/>
            <person name="Boursnell M.E.G."/>
        </authorList>
    </citation>
    <scope>NUCLEOTIDE SEQUENCE [GENOMIC DNA]</scope>
    <source>
        <strain>FP-9 / Isolate HP-438</strain>
    </source>
</reference>
<reference key="2">
    <citation type="journal article" date="2000" name="J. Virol.">
        <title>The genome of fowlpox virus.</title>
        <authorList>
            <person name="Afonso C.L."/>
            <person name="Tulman E.R."/>
            <person name="Lu Z."/>
            <person name="Zsak L."/>
            <person name="Kutish G.F."/>
            <person name="Rock D.L."/>
        </authorList>
    </citation>
    <scope>NUCLEOTIDE SEQUENCE [LARGE SCALE GENOMIC DNA]</scope>
</reference>
<sequence>MEVTLKEFRELCTSISTESSYVKKTKLISEFIHRGRDYNDVYIITKLLLPGTGKLIYNINDKQLVKLFSKIFCHDADEMYKYVINIGDVAYVIGSFLKKSKSVVDYATESTLTLHEVDCFLTRLSTVTRENDQIKEIKKIIPRCTPNDLRHIIRLIKHDLRMNIGPKHVLSGLHKDAYGIFKLCNNLEQVVQRSLEDNIKPLIELMVPLQPMLASACKTFSEAVKKCPNGIIVEFKYDGERIQIHKHDKNFKYFSRSLKPITPHKVTDFEELLDRAFPSAKNMILDGEIILIDTETNQPLPFGTLGINKKSMYHNACVCIFIFDCLYFNDTVLIDKPLIERRNIIHANIKEIPNRILLSEVKNISTDEELSKLLHIVLSKNIEGFVLKDAKGVYEPGMRRWLKIKKDYLDGCVMADKADLVVLGAYYGKGNKSGILSSFLMGCYDTKSEKWCTVTKCSGGHTDLELQEINDNLSVVPFDRNAIPDWLSINKIHYPDVIISDISLAPVWEIIGSEFTRSSTHTASNISIRFPRCSRIREDKTYETANNLNDIKQLYAVSISPPEE</sequence>